<gene>
    <name evidence="1" type="primary">rpsQ</name>
    <name evidence="1" type="synonym">rps17</name>
    <name type="ordered locus">Syncc9605_0367</name>
</gene>
<evidence type="ECO:0000255" key="1">
    <source>
        <dbReference type="HAMAP-Rule" id="MF_01345"/>
    </source>
</evidence>
<evidence type="ECO:0000305" key="2"/>
<accession>Q3AMN9</accession>
<organism>
    <name type="scientific">Synechococcus sp. (strain CC9605)</name>
    <dbReference type="NCBI Taxonomy" id="110662"/>
    <lineage>
        <taxon>Bacteria</taxon>
        <taxon>Bacillati</taxon>
        <taxon>Cyanobacteriota</taxon>
        <taxon>Cyanophyceae</taxon>
        <taxon>Synechococcales</taxon>
        <taxon>Synechococcaceae</taxon>
        <taxon>Synechococcus</taxon>
    </lineage>
</organism>
<comment type="function">
    <text evidence="1">One of the primary rRNA binding proteins, it binds specifically to the 5'-end of 16S ribosomal RNA.</text>
</comment>
<comment type="subunit">
    <text evidence="1">Part of the 30S ribosomal subunit.</text>
</comment>
<comment type="similarity">
    <text evidence="1">Belongs to the universal ribosomal protein uS17 family.</text>
</comment>
<sequence length="98" mass="11165">MAVKERIGTVVSDKMEKTVVVAVESRFPHPIYQKTVSRTTRYKAHDEDNTCRVGDRVRITETRPMSRQKRWAIAEVLSHSPKAAAEEANKAEAQEVKQ</sequence>
<feature type="chain" id="PRO_0000233587" description="Small ribosomal subunit protein uS17">
    <location>
        <begin position="1"/>
        <end position="98"/>
    </location>
</feature>
<reference key="1">
    <citation type="submission" date="2005-07" db="EMBL/GenBank/DDBJ databases">
        <title>Complete sequence of Synechococcus sp. CC9605.</title>
        <authorList>
            <consortium name="US DOE Joint Genome Institute"/>
            <person name="Copeland A."/>
            <person name="Lucas S."/>
            <person name="Lapidus A."/>
            <person name="Barry K."/>
            <person name="Detter J.C."/>
            <person name="Glavina T."/>
            <person name="Hammon N."/>
            <person name="Israni S."/>
            <person name="Pitluck S."/>
            <person name="Schmutz J."/>
            <person name="Martinez M."/>
            <person name="Larimer F."/>
            <person name="Land M."/>
            <person name="Kyrpides N."/>
            <person name="Ivanova N."/>
            <person name="Richardson P."/>
        </authorList>
    </citation>
    <scope>NUCLEOTIDE SEQUENCE [LARGE SCALE GENOMIC DNA]</scope>
    <source>
        <strain>CC9605</strain>
    </source>
</reference>
<proteinExistence type="inferred from homology"/>
<dbReference type="EMBL" id="CP000110">
    <property type="protein sequence ID" value="ABB34143.1"/>
    <property type="molecule type" value="Genomic_DNA"/>
</dbReference>
<dbReference type="RefSeq" id="WP_006850241.1">
    <property type="nucleotide sequence ID" value="NC_007516.1"/>
</dbReference>
<dbReference type="SMR" id="Q3AMN9"/>
<dbReference type="STRING" id="110662.Syncc9605_0367"/>
<dbReference type="KEGG" id="syd:Syncc9605_0367"/>
<dbReference type="eggNOG" id="COG0186">
    <property type="taxonomic scope" value="Bacteria"/>
</dbReference>
<dbReference type="HOGENOM" id="CLU_073626_1_2_3"/>
<dbReference type="OrthoDB" id="9811714at2"/>
<dbReference type="GO" id="GO:0022627">
    <property type="term" value="C:cytosolic small ribosomal subunit"/>
    <property type="evidence" value="ECO:0007669"/>
    <property type="project" value="TreeGrafter"/>
</dbReference>
<dbReference type="GO" id="GO:0019843">
    <property type="term" value="F:rRNA binding"/>
    <property type="evidence" value="ECO:0007669"/>
    <property type="project" value="UniProtKB-UniRule"/>
</dbReference>
<dbReference type="GO" id="GO:0003735">
    <property type="term" value="F:structural constituent of ribosome"/>
    <property type="evidence" value="ECO:0007669"/>
    <property type="project" value="InterPro"/>
</dbReference>
<dbReference type="GO" id="GO:0006412">
    <property type="term" value="P:translation"/>
    <property type="evidence" value="ECO:0007669"/>
    <property type="project" value="UniProtKB-UniRule"/>
</dbReference>
<dbReference type="CDD" id="cd00364">
    <property type="entry name" value="Ribosomal_uS17"/>
    <property type="match status" value="1"/>
</dbReference>
<dbReference type="Gene3D" id="2.40.50.140">
    <property type="entry name" value="Nucleic acid-binding proteins"/>
    <property type="match status" value="1"/>
</dbReference>
<dbReference type="HAMAP" id="MF_01345_B">
    <property type="entry name" value="Ribosomal_uS17_B"/>
    <property type="match status" value="1"/>
</dbReference>
<dbReference type="InterPro" id="IPR012340">
    <property type="entry name" value="NA-bd_OB-fold"/>
</dbReference>
<dbReference type="InterPro" id="IPR000266">
    <property type="entry name" value="Ribosomal_uS17"/>
</dbReference>
<dbReference type="InterPro" id="IPR019984">
    <property type="entry name" value="Ribosomal_uS17_bact/chlr"/>
</dbReference>
<dbReference type="NCBIfam" id="NF004123">
    <property type="entry name" value="PRK05610.1"/>
    <property type="match status" value="1"/>
</dbReference>
<dbReference type="NCBIfam" id="TIGR03635">
    <property type="entry name" value="uS17_bact"/>
    <property type="match status" value="1"/>
</dbReference>
<dbReference type="PANTHER" id="PTHR10744">
    <property type="entry name" value="40S RIBOSOMAL PROTEIN S11 FAMILY MEMBER"/>
    <property type="match status" value="1"/>
</dbReference>
<dbReference type="PANTHER" id="PTHR10744:SF1">
    <property type="entry name" value="SMALL RIBOSOMAL SUBUNIT PROTEIN US17M"/>
    <property type="match status" value="1"/>
</dbReference>
<dbReference type="Pfam" id="PF00366">
    <property type="entry name" value="Ribosomal_S17"/>
    <property type="match status" value="1"/>
</dbReference>
<dbReference type="PRINTS" id="PR00973">
    <property type="entry name" value="RIBOSOMALS17"/>
</dbReference>
<dbReference type="SUPFAM" id="SSF50249">
    <property type="entry name" value="Nucleic acid-binding proteins"/>
    <property type="match status" value="1"/>
</dbReference>
<name>RS17_SYNSC</name>
<keyword id="KW-0687">Ribonucleoprotein</keyword>
<keyword id="KW-0689">Ribosomal protein</keyword>
<keyword id="KW-0694">RNA-binding</keyword>
<keyword id="KW-0699">rRNA-binding</keyword>
<protein>
    <recommendedName>
        <fullName evidence="1">Small ribosomal subunit protein uS17</fullName>
    </recommendedName>
    <alternativeName>
        <fullName evidence="2">30S ribosomal protein S17</fullName>
    </alternativeName>
</protein>